<organism>
    <name type="scientific">Aspergillus kawachii (strain NBRC 4308)</name>
    <name type="common">White koji mold</name>
    <name type="synonym">Aspergillus awamori var. kawachi</name>
    <dbReference type="NCBI Taxonomy" id="1033177"/>
    <lineage>
        <taxon>Eukaryota</taxon>
        <taxon>Fungi</taxon>
        <taxon>Dikarya</taxon>
        <taxon>Ascomycota</taxon>
        <taxon>Pezizomycotina</taxon>
        <taxon>Eurotiomycetes</taxon>
        <taxon>Eurotiomycetidae</taxon>
        <taxon>Eurotiales</taxon>
        <taxon>Aspergillaceae</taxon>
        <taxon>Aspergillus</taxon>
        <taxon>Aspergillus subgen. Circumdati</taxon>
    </lineage>
</organism>
<protein>
    <recommendedName>
        <fullName>Alpha-L-arabinofuranosidase A</fullName>
        <shortName>ABF A</shortName>
        <shortName>Arabinosidase A</shortName>
        <ecNumber>3.2.1.55</ecNumber>
    </recommendedName>
</protein>
<reference key="1">
    <citation type="journal article" date="2003" name="J. Biosci. Bioeng.">
        <title>Role of two alpha-L-arabinofuranosidases in arabinoxylan degradation and characteristics of the encoding genes from shochu koji molds, Aspergillus kawachii and Aspergillus awamori.</title>
        <authorList>
            <person name="Koseki T."/>
            <person name="Okuda M."/>
            <person name="Sudoh S."/>
            <person name="Kizaki Y."/>
            <person name="Iwano K."/>
            <person name="Aramaki I."/>
            <person name="Matsuzawa H."/>
        </authorList>
    </citation>
    <scope>NUCLEOTIDE SEQUENCE [GENOMIC DNA]</scope>
    <scope>PROTEIN SEQUENCE OF 26-43 AND 482-494</scope>
    <scope>SUBCELLULAR LOCATION</scope>
    <scope>INDUCTION</scope>
    <scope>FUNCTION</scope>
    <scope>BIOPHYSICOCHEMICAL PROPERTIES</scope>
    <source>
        <strain>NBRC 4308</strain>
    </source>
</reference>
<reference key="2">
    <citation type="journal article" date="2011" name="Eukaryot. Cell">
        <title>Genome sequence of the white koji mold Aspergillus kawachii IFO 4308, used for brewing the Japanese distilled spirit shochu.</title>
        <authorList>
            <person name="Futagami T."/>
            <person name="Mori K."/>
            <person name="Yamashita A."/>
            <person name="Wada S."/>
            <person name="Kajiwara Y."/>
            <person name="Takashita H."/>
            <person name="Omori T."/>
            <person name="Takegawa K."/>
            <person name="Tashiro K."/>
            <person name="Kuhara S."/>
            <person name="Goto M."/>
        </authorList>
    </citation>
    <scope>NUCLEOTIDE SEQUENCE [LARGE SCALE GENOMIC DNA]</scope>
    <source>
        <strain>NBRC 4308</strain>
    </source>
</reference>
<sequence>MVAFSALSGVSALSLLLCLVQHAHGVSLKVSTQGGNSSSPILYGFMFEDINHSGDGGIYGQLLQNPGLQGTTPNLTAWAAVGDATIAIDGDSPLTSAIPSTIKLDVADDATGAVGLTNEGYWGIPVDGSEFQSSFWIKGDYSGDITVRLVGNYTGTEYGSATITHTSTADNFTQASVKFPTTKAPDGNVLYELTVDGSVAAGSSLNFGYLTLFGETYKSRENGLKPQLANVLADMKGSFLRFPGGNNLEGNSAENRWKWNETIGDLWDRPGREGTWTYYNTDGLGLHEYFYWCEDLGLVPVLGVWDGFALESGGNTPITGDALTPYIDDVLNELEYILGDTSTTYGAWRAANGQEEPWNLTMVEIGNEDMLGGGCESYAERFTAFYDAIHAAYPDLILIASTSEADCLPESMPEGSWVDYHDYSTPDGLVGQFNYFDNLDRSVPYFIGEYSRWEIDWPNMKGSVSEAVFMIGFERNSDVVKMAAYAPLLQLVNSTQWTPDLIGYTQSPDDIFLSTSYYVQEMFSRNRGDTIKEVTSDSDFGPLYWVASSAGDSYYVKLANYGSETQDLTVSIPGTSTGKLTVLADNDPDAYNSDTQTLVTPSESTVQASNGTFTFSLPAWAVAVLAAN</sequence>
<dbReference type="EC" id="3.2.1.55"/>
<dbReference type="EMBL" id="AB085903">
    <property type="protein sequence ID" value="BAB96815.1"/>
    <property type="molecule type" value="Genomic_DNA"/>
</dbReference>
<dbReference type="EMBL" id="DF126487">
    <property type="protein sequence ID" value="GAA92059.1"/>
    <property type="molecule type" value="Genomic_DNA"/>
</dbReference>
<dbReference type="SMR" id="Q8NK90"/>
<dbReference type="STRING" id="1033177.Q8NK90"/>
<dbReference type="CAZy" id="GH51">
    <property type="family name" value="Glycoside Hydrolase Family 51"/>
</dbReference>
<dbReference type="GlyCosmos" id="Q8NK90">
    <property type="glycosylation" value="8 sites, No reported glycans"/>
</dbReference>
<dbReference type="VEuPathDB" id="FungiDB:AKAW_10173"/>
<dbReference type="eggNOG" id="ENOG502QQEX">
    <property type="taxonomic scope" value="Eukaryota"/>
</dbReference>
<dbReference type="InParanoid" id="Q8NK90"/>
<dbReference type="OrthoDB" id="23152at5052"/>
<dbReference type="SABIO-RK" id="Q8NK90"/>
<dbReference type="UniPathway" id="UPA00667"/>
<dbReference type="GO" id="GO:0005576">
    <property type="term" value="C:extracellular region"/>
    <property type="evidence" value="ECO:0000314"/>
    <property type="project" value="UniProtKB"/>
</dbReference>
<dbReference type="GO" id="GO:0046556">
    <property type="term" value="F:alpha-L-arabinofuranosidase activity"/>
    <property type="evidence" value="ECO:0000314"/>
    <property type="project" value="UniProtKB"/>
</dbReference>
<dbReference type="GO" id="GO:0031222">
    <property type="term" value="P:arabinan catabolic process"/>
    <property type="evidence" value="ECO:0007669"/>
    <property type="project" value="UniProtKB-UniPathway"/>
</dbReference>
<dbReference type="GO" id="GO:0019566">
    <property type="term" value="P:arabinose metabolic process"/>
    <property type="evidence" value="ECO:0000314"/>
    <property type="project" value="UniProtKB"/>
</dbReference>
<dbReference type="GO" id="GO:0046373">
    <property type="term" value="P:L-arabinose metabolic process"/>
    <property type="evidence" value="ECO:0007669"/>
    <property type="project" value="InterPro"/>
</dbReference>
<dbReference type="FunFam" id="2.60.40.1180:FF:000036">
    <property type="entry name" value="Probable alpha-L-arabinofuranosidase A"/>
    <property type="match status" value="1"/>
</dbReference>
<dbReference type="FunFam" id="3.20.20.80:FF:000092">
    <property type="entry name" value="Probable alpha-L-arabinofuranosidase A"/>
    <property type="match status" value="1"/>
</dbReference>
<dbReference type="Gene3D" id="3.20.20.80">
    <property type="entry name" value="Glycosidases"/>
    <property type="match status" value="1"/>
</dbReference>
<dbReference type="Gene3D" id="2.60.40.1180">
    <property type="entry name" value="Golgi alpha-mannosidase II"/>
    <property type="match status" value="1"/>
</dbReference>
<dbReference type="InterPro" id="IPR010720">
    <property type="entry name" value="Alpha-L-AF_C"/>
</dbReference>
<dbReference type="InterPro" id="IPR055235">
    <property type="entry name" value="ASD1_cat"/>
</dbReference>
<dbReference type="InterPro" id="IPR013780">
    <property type="entry name" value="Glyco_hydro_b"/>
</dbReference>
<dbReference type="InterPro" id="IPR017853">
    <property type="entry name" value="Glycoside_hydrolase_SF"/>
</dbReference>
<dbReference type="InterPro" id="IPR051563">
    <property type="entry name" value="Glycosyl_Hydrolase_51"/>
</dbReference>
<dbReference type="PANTHER" id="PTHR31776">
    <property type="entry name" value="ALPHA-L-ARABINOFURANOSIDASE 1"/>
    <property type="match status" value="1"/>
</dbReference>
<dbReference type="PANTHER" id="PTHR31776:SF0">
    <property type="entry name" value="ALPHA-L-ARABINOFURANOSIDASE 1"/>
    <property type="match status" value="1"/>
</dbReference>
<dbReference type="Pfam" id="PF06964">
    <property type="entry name" value="Alpha-L-AF_C"/>
    <property type="match status" value="1"/>
</dbReference>
<dbReference type="Pfam" id="PF22848">
    <property type="entry name" value="ASD1_dom"/>
    <property type="match status" value="1"/>
</dbReference>
<dbReference type="SMART" id="SM00813">
    <property type="entry name" value="Alpha-L-AF_C"/>
    <property type="match status" value="1"/>
</dbReference>
<dbReference type="SUPFAM" id="SSF51445">
    <property type="entry name" value="(Trans)glycosidases"/>
    <property type="match status" value="1"/>
</dbReference>
<dbReference type="SUPFAM" id="SSF51011">
    <property type="entry name" value="Glycosyl hydrolase domain"/>
    <property type="match status" value="1"/>
</dbReference>
<proteinExistence type="evidence at protein level"/>
<evidence type="ECO:0000255" key="1"/>
<evidence type="ECO:0000269" key="2">
    <source>
    </source>
</evidence>
<evidence type="ECO:0000305" key="3"/>
<name>ABFA_ASPKW</name>
<feature type="signal peptide" evidence="2">
    <location>
        <begin position="1"/>
        <end position="25"/>
    </location>
</feature>
<feature type="chain" id="PRO_0000394598" description="Alpha-L-arabinofuranosidase A">
    <location>
        <begin position="26"/>
        <end position="628"/>
    </location>
</feature>
<feature type="glycosylation site" description="N-linked (GlcNAc...) asparagine" evidence="1">
    <location>
        <position position="36"/>
    </location>
</feature>
<feature type="glycosylation site" description="N-linked (GlcNAc...) asparagine" evidence="1">
    <location>
        <position position="51"/>
    </location>
</feature>
<feature type="glycosylation site" description="N-linked (GlcNAc...) asparagine" evidence="1">
    <location>
        <position position="74"/>
    </location>
</feature>
<feature type="glycosylation site" description="N-linked (GlcNAc...) asparagine" evidence="1">
    <location>
        <position position="152"/>
    </location>
</feature>
<feature type="glycosylation site" description="N-linked (GlcNAc...) asparagine" evidence="1">
    <location>
        <position position="171"/>
    </location>
</feature>
<feature type="glycosylation site" description="N-linked (GlcNAc...) asparagine" evidence="1">
    <location>
        <position position="260"/>
    </location>
</feature>
<feature type="glycosylation site" description="N-linked (GlcNAc...) asparagine" evidence="1">
    <location>
        <position position="359"/>
    </location>
</feature>
<feature type="glycosylation site" description="N-linked (GlcNAc...) asparagine" evidence="1">
    <location>
        <position position="493"/>
    </location>
</feature>
<feature type="sequence conflict" description="In Ref. 1; BAB96815." evidence="3" ref="1">
    <original>D</original>
    <variation>E</variation>
    <location>
        <position position="140"/>
    </location>
</feature>
<accession>Q8NK90</accession>
<accession>G7XYQ0</accession>
<comment type="function">
    <text evidence="2">Alpha-L-arabinofuranosidase involved in the degradation of arabinoxylan, a major component of plant hemicellulose. Acts only on small linear 1,5-alpha-linked L-arabinofuranosyl oligosaccharides.</text>
</comment>
<comment type="catalytic activity">
    <reaction>
        <text>Hydrolysis of terminal non-reducing alpha-L-arabinofuranoside residues in alpha-L-arabinosides.</text>
        <dbReference type="EC" id="3.2.1.55"/>
    </reaction>
</comment>
<comment type="biophysicochemical properties">
    <phDependence>
        <text evidence="2">Optimum pH is 4.0. Stable between pH 3.0 and 7.0.</text>
    </phDependence>
    <temperatureDependence>
        <text evidence="2">Optimum temperature is 55 degrees Celsius.</text>
    </temperatureDependence>
</comment>
<comment type="pathway">
    <text>Glycan metabolism; L-arabinan degradation.</text>
</comment>
<comment type="subcellular location">
    <subcellularLocation>
        <location evidence="2">Secreted</location>
    </subcellularLocation>
</comment>
<comment type="similarity">
    <text evidence="3">Belongs to the glycosyl hydrolase 51 family.</text>
</comment>
<keyword id="KW-0119">Carbohydrate metabolism</keyword>
<keyword id="KW-0903">Direct protein sequencing</keyword>
<keyword id="KW-0325">Glycoprotein</keyword>
<keyword id="KW-0326">Glycosidase</keyword>
<keyword id="KW-0378">Hydrolase</keyword>
<keyword id="KW-0624">Polysaccharide degradation</keyword>
<keyword id="KW-0964">Secreted</keyword>
<keyword id="KW-0732">Signal</keyword>
<gene>
    <name type="primary">abfA</name>
    <name type="ORF">AKAW_10173</name>
</gene>